<evidence type="ECO:0000250" key="1"/>
<evidence type="ECO:0000250" key="2">
    <source>
        <dbReference type="UniProtKB" id="P34239"/>
    </source>
</evidence>
<evidence type="ECO:0000255" key="3">
    <source>
        <dbReference type="PROSITE-ProRule" id="PRU01180"/>
    </source>
</evidence>
<evidence type="ECO:0000256" key="4">
    <source>
        <dbReference type="SAM" id="MobiDB-lite"/>
    </source>
</evidence>
<evidence type="ECO:0000305" key="5"/>
<sequence length="828" mass="93299">MLGNLLRNKTSSSGFEKSSEHSDFSSVVPNVPVYCKAASTGTTKTAAGALLDTAVNVEKPSEMLSTTSPPILDHISDDLKLKLFGSRDIPYSRPIDTLQNNGGLGTDKITSINEKTYAFRILIIEEAGQMACRNNYRDIFDYTTSKISNSMEQIRPSELKEYIFGSPVRSSDLTQCDKIRTIPNSDLVLITRIFYYTHQYNRIAISLCIPRILLPVVAESWSSISSWLTQTQKMLIGFLTKNRIMQENTGNYSNNSVIKLSNIDIRTHYPKEIEIMVQTLQKRVIPGLRSMSEIPRLFLYPETFKEFVHVWFKSIFNWIEIKDGPKLGFLPLLMAMIISDYRHTIRELKTSKIVILSGNMVVANKLLFILSALLEPKYKGQITIRRENIRSDSSAVSRNKSNNNFVDKPETELSTLTSTDNLLSRTENNSNHNCNNSNVSSNSIGSPNFHSLRKGWQIPNRRNSNTSVSVSSSESLAEVIQPSSFKSGSSSLHYLSSSISSQPGSYGSWFNKRPTISQFFQPSPSLKHNESWERLQTTAGNMQRTSSSSSLQQATSRLSLTTPQQSPSISEYDEYPWMGTPGSPNVGDVSHAPPLVKNISYKFPLKNVELKRDCQRISQDDLLDEAFERICQPSLADLNSTYEIFPGNSSYADILTTDSDIDDGLMNKPLELLPKYTMYLTHFNNFFQLQACPAGQESESRITNSMKIDLLKADYTRSLLVSLRSRDIRDVALKREFTGNNNNNSNQNIYDENFVGKRKYVLKQKTRKIFSCGKIGKLSTSLENCVNFVENSIKSAMMLYDDNGIDSELRDSEALRIFSSLVHYCNAG</sequence>
<dbReference type="EMBL" id="AAFW02000150">
    <property type="protein sequence ID" value="EDN60104.1"/>
    <property type="molecule type" value="Genomic_DNA"/>
</dbReference>
<dbReference type="SMR" id="A6ZZE9"/>
<dbReference type="HOGENOM" id="CLU_010482_0_0_1"/>
<dbReference type="Proteomes" id="UP000007060">
    <property type="component" value="Unassembled WGS sequence"/>
</dbReference>
<dbReference type="GO" id="GO:0005737">
    <property type="term" value="C:cytoplasm"/>
    <property type="evidence" value="ECO:0007669"/>
    <property type="project" value="UniProtKB-ARBA"/>
</dbReference>
<dbReference type="GO" id="GO:0005730">
    <property type="term" value="C:nucleolus"/>
    <property type="evidence" value="ECO:0007669"/>
    <property type="project" value="TreeGrafter"/>
</dbReference>
<dbReference type="GO" id="GO:0005654">
    <property type="term" value="C:nucleoplasm"/>
    <property type="evidence" value="ECO:0007669"/>
    <property type="project" value="TreeGrafter"/>
</dbReference>
<dbReference type="GO" id="GO:0006865">
    <property type="term" value="P:amino acid transport"/>
    <property type="evidence" value="ECO:0007669"/>
    <property type="project" value="UniProtKB-KW"/>
</dbReference>
<dbReference type="GO" id="GO:0015031">
    <property type="term" value="P:protein transport"/>
    <property type="evidence" value="ECO:0007669"/>
    <property type="project" value="UniProtKB-KW"/>
</dbReference>
<dbReference type="InterPro" id="IPR037545">
    <property type="entry name" value="DENN_FNIP1/2"/>
</dbReference>
<dbReference type="InterPro" id="IPR041153">
    <property type="entry name" value="LST4_longin"/>
</dbReference>
<dbReference type="PANTHER" id="PTHR16148:SF14">
    <property type="entry name" value="MYND-TYPE DOMAIN-CONTAINING PROTEIN"/>
    <property type="match status" value="1"/>
</dbReference>
<dbReference type="PANTHER" id="PTHR16148">
    <property type="entry name" value="NF-KAPPA-B-REPRESSING FACTOR-RELATED"/>
    <property type="match status" value="1"/>
</dbReference>
<dbReference type="Pfam" id="PF18639">
    <property type="entry name" value="Longin_2"/>
    <property type="match status" value="1"/>
</dbReference>
<dbReference type="PROSITE" id="PS51836">
    <property type="entry name" value="DENN_FNIP12"/>
    <property type="match status" value="1"/>
</dbReference>
<gene>
    <name type="primary">LST4</name>
    <name type="ORF">SCY_3209</name>
</gene>
<proteinExistence type="inferred from homology"/>
<accession>A6ZZE9</accession>
<name>LST4_YEAS7</name>
<reference key="1">
    <citation type="journal article" date="2007" name="Proc. Natl. Acad. Sci. U.S.A.">
        <title>Genome sequencing and comparative analysis of Saccharomyces cerevisiae strain YJM789.</title>
        <authorList>
            <person name="Wei W."/>
            <person name="McCusker J.H."/>
            <person name="Hyman R.W."/>
            <person name="Jones T."/>
            <person name="Ning Y."/>
            <person name="Cao Z."/>
            <person name="Gu Z."/>
            <person name="Bruno D."/>
            <person name="Miranda M."/>
            <person name="Nguyen M."/>
            <person name="Wilhelmy J."/>
            <person name="Komp C."/>
            <person name="Tamse R."/>
            <person name="Wang X."/>
            <person name="Jia P."/>
            <person name="Luedi P."/>
            <person name="Oefner P.J."/>
            <person name="David L."/>
            <person name="Dietrich F.S."/>
            <person name="Li Y."/>
            <person name="Davis R.W."/>
            <person name="Steinmetz L.M."/>
        </authorList>
    </citation>
    <scope>NUCLEOTIDE SEQUENCE [LARGE SCALE GENOMIC DNA]</scope>
    <source>
        <strain>YJM789</strain>
    </source>
</reference>
<keyword id="KW-0029">Amino-acid transport</keyword>
<keyword id="KW-0597">Phosphoprotein</keyword>
<keyword id="KW-0653">Protein transport</keyword>
<keyword id="KW-0813">Transport</keyword>
<organism>
    <name type="scientific">Saccharomyces cerevisiae (strain YJM789)</name>
    <name type="common">Baker's yeast</name>
    <dbReference type="NCBI Taxonomy" id="307796"/>
    <lineage>
        <taxon>Eukaryota</taxon>
        <taxon>Fungi</taxon>
        <taxon>Dikarya</taxon>
        <taxon>Ascomycota</taxon>
        <taxon>Saccharomycotina</taxon>
        <taxon>Saccharomycetes</taxon>
        <taxon>Saccharomycetales</taxon>
        <taxon>Saccharomycetaceae</taxon>
        <taxon>Saccharomyces</taxon>
    </lineage>
</organism>
<protein>
    <recommendedName>
        <fullName>Protein LST4</fullName>
    </recommendedName>
    <alternativeName>
        <fullName>Lethal with SEC30 protein 4</fullName>
    </alternativeName>
</protein>
<feature type="chain" id="PRO_0000324408" description="Protein LST4">
    <location>
        <begin position="1"/>
        <end position="828"/>
    </location>
</feature>
<feature type="domain" description="uDENN FNIP1/2-type" evidence="3">
    <location>
        <begin position="114"/>
        <end position="302"/>
    </location>
</feature>
<feature type="domain" description="cDENN FNIP1/2-type" evidence="3">
    <location>
        <begin position="310"/>
        <end position="712"/>
    </location>
</feature>
<feature type="domain" description="dDENN FNIP1/2-type" evidence="3">
    <location>
        <begin position="718"/>
        <end position="825"/>
    </location>
</feature>
<feature type="region of interest" description="Disordered" evidence="4">
    <location>
        <begin position="1"/>
        <end position="25"/>
    </location>
</feature>
<feature type="region of interest" description="Disordered" evidence="4">
    <location>
        <begin position="423"/>
        <end position="444"/>
    </location>
</feature>
<feature type="region of interest" description="Disordered" evidence="4">
    <location>
        <begin position="538"/>
        <end position="569"/>
    </location>
</feature>
<feature type="compositionally biased region" description="Low complexity" evidence="4">
    <location>
        <begin position="543"/>
        <end position="562"/>
    </location>
</feature>
<feature type="modified residue" description="Phosphoserine" evidence="2">
    <location>
        <position position="401"/>
    </location>
</feature>
<comment type="function">
    <text evidence="1">Involved in extracellular amino acid uptake. Required for the trafficking of the GAP1 nitrogen-regulated general amino acid permease from the Golgi to the plasma membrane (By similarity).</text>
</comment>
<comment type="similarity">
    <text evidence="5">Belongs to the LST4 family.</text>
</comment>